<comment type="subcellular location">
    <subcellularLocation>
        <location>Cytoplasm</location>
    </subcellularLocation>
    <subcellularLocation>
        <location evidence="1">Cell inner membrane</location>
        <topology evidence="1">Peripheral membrane protein</topology>
        <orientation evidence="1">Cytoplasmic side</orientation>
    </subcellularLocation>
</comment>
<comment type="similarity">
    <text evidence="1">Belongs to the HflD family.</text>
</comment>
<feature type="chain" id="PRO_0000390644" description="High frequency lysogenization protein HflD homolog">
    <location>
        <begin position="1"/>
        <end position="204"/>
    </location>
</feature>
<name>HFLD_RUTMC</name>
<gene>
    <name evidence="1" type="primary">hflD</name>
    <name type="ordered locus">Rmag_0748</name>
</gene>
<keyword id="KW-0997">Cell inner membrane</keyword>
<keyword id="KW-1003">Cell membrane</keyword>
<keyword id="KW-0963">Cytoplasm</keyword>
<keyword id="KW-0472">Membrane</keyword>
<protein>
    <recommendedName>
        <fullName evidence="1">High frequency lysogenization protein HflD homolog</fullName>
    </recommendedName>
</protein>
<organism>
    <name type="scientific">Ruthia magnifica subsp. Calyptogena magnifica</name>
    <dbReference type="NCBI Taxonomy" id="413404"/>
    <lineage>
        <taxon>Bacteria</taxon>
        <taxon>Pseudomonadati</taxon>
        <taxon>Pseudomonadota</taxon>
        <taxon>Gammaproteobacteria</taxon>
        <taxon>Candidatus Pseudothioglobaceae</taxon>
        <taxon>Candidatus Ruthturnera</taxon>
    </lineage>
</organism>
<proteinExistence type="inferred from homology"/>
<dbReference type="EMBL" id="CP000488">
    <property type="protein sequence ID" value="ABL02475.1"/>
    <property type="molecule type" value="Genomic_DNA"/>
</dbReference>
<dbReference type="RefSeq" id="WP_011738100.1">
    <property type="nucleotide sequence ID" value="NC_008610.1"/>
</dbReference>
<dbReference type="SMR" id="A1AX18"/>
<dbReference type="STRING" id="413404.Rmag_0748"/>
<dbReference type="KEGG" id="rma:Rmag_0748"/>
<dbReference type="eggNOG" id="COG2915">
    <property type="taxonomic scope" value="Bacteria"/>
</dbReference>
<dbReference type="HOGENOM" id="CLU_098920_0_0_6"/>
<dbReference type="OrthoDB" id="9788031at2"/>
<dbReference type="Proteomes" id="UP000002587">
    <property type="component" value="Chromosome"/>
</dbReference>
<dbReference type="GO" id="GO:0005737">
    <property type="term" value="C:cytoplasm"/>
    <property type="evidence" value="ECO:0007669"/>
    <property type="project" value="UniProtKB-SubCell"/>
</dbReference>
<dbReference type="GO" id="GO:0005886">
    <property type="term" value="C:plasma membrane"/>
    <property type="evidence" value="ECO:0007669"/>
    <property type="project" value="UniProtKB-SubCell"/>
</dbReference>
<dbReference type="Gene3D" id="1.10.3890.10">
    <property type="entry name" value="HflD-like"/>
    <property type="match status" value="1"/>
</dbReference>
<dbReference type="HAMAP" id="MF_00695">
    <property type="entry name" value="HflD_protein"/>
    <property type="match status" value="1"/>
</dbReference>
<dbReference type="InterPro" id="IPR007451">
    <property type="entry name" value="HflD"/>
</dbReference>
<dbReference type="InterPro" id="IPR035932">
    <property type="entry name" value="HflD-like_sf"/>
</dbReference>
<dbReference type="NCBIfam" id="NF001246">
    <property type="entry name" value="PRK00218.1-2"/>
    <property type="match status" value="1"/>
</dbReference>
<dbReference type="PANTHER" id="PTHR38100">
    <property type="entry name" value="HIGH FREQUENCY LYSOGENIZATION PROTEIN HFLD"/>
    <property type="match status" value="1"/>
</dbReference>
<dbReference type="PANTHER" id="PTHR38100:SF1">
    <property type="entry name" value="HIGH FREQUENCY LYSOGENIZATION PROTEIN HFLD"/>
    <property type="match status" value="1"/>
</dbReference>
<dbReference type="Pfam" id="PF04356">
    <property type="entry name" value="DUF489"/>
    <property type="match status" value="1"/>
</dbReference>
<dbReference type="SUPFAM" id="SSF101322">
    <property type="entry name" value="YcfC-like"/>
    <property type="match status" value="1"/>
</dbReference>
<reference key="1">
    <citation type="journal article" date="2007" name="Science">
        <title>The Calyptogena magnifica chemoautotrophic symbiont genome.</title>
        <authorList>
            <person name="Newton I.L.G."/>
            <person name="Woyke T."/>
            <person name="Auchtung T.A."/>
            <person name="Dilly G.F."/>
            <person name="Dutton R.J."/>
            <person name="Fisher M.C."/>
            <person name="Fontanez K.M."/>
            <person name="Lau E."/>
            <person name="Stewart F.J."/>
            <person name="Richardson P.M."/>
            <person name="Barry K.W."/>
            <person name="Saunders E."/>
            <person name="Detter J.C."/>
            <person name="Wu D."/>
            <person name="Eisen J.A."/>
            <person name="Cavanaugh C.M."/>
        </authorList>
    </citation>
    <scope>NUCLEOTIDE SEQUENCE [LARGE SCALE GENOMIC DNA]</scope>
</reference>
<evidence type="ECO:0000255" key="1">
    <source>
        <dbReference type="HAMAP-Rule" id="MF_00695"/>
    </source>
</evidence>
<sequence>MNKLRNQTLALASILQTTTLVDQLASTGACDANSNQASLKSIITSSTKLEEVFNSKQDLLVGIAALKVVLGNKTKRIQQVILYALALINLEKKLMKNQTLLNQITLEIDLIKNQEFFEISHANSVARLAQLYKSTLGGLNPRIMINGEQIYLSNKHTTNHIRALLLAGIRAVSLWKSQGGKTWHLLFNKKKILNLISSLEGLNK</sequence>
<accession>A1AX18</accession>